<organism>
    <name type="scientific">Saccharomyces cerevisiae (strain ATCC 204508 / S288c)</name>
    <name type="common">Baker's yeast</name>
    <dbReference type="NCBI Taxonomy" id="559292"/>
    <lineage>
        <taxon>Eukaryota</taxon>
        <taxon>Fungi</taxon>
        <taxon>Dikarya</taxon>
        <taxon>Ascomycota</taxon>
        <taxon>Saccharomycotina</taxon>
        <taxon>Saccharomycetes</taxon>
        <taxon>Saccharomycetales</taxon>
        <taxon>Saccharomycetaceae</taxon>
        <taxon>Saccharomyces</taxon>
    </lineage>
</organism>
<protein>
    <recommendedName>
        <fullName>Sporulation protein RMD8</fullName>
    </recommendedName>
    <alternativeName>
        <fullName>Required for meiotic nuclear division protein 8</fullName>
    </alternativeName>
</protein>
<sequence length="662" mass="75914">MSYKANQPSPGEMPKRSPSILVTDARTSKNRMSAPFAGHAAGSRKNMENAGVTKSQGVRSSAIGPSPLQSFTHPRRRSSGRFSDISIDNILSDNSDIPSARREERLSSSSSDRPRQYERLSSRRKMINPLPPRTSKTSQKLVLIPEDDNLNHFQTLPTNALDRQRPKVGSMKSNSFDRLPRYSKEKSMARITAYNVADGFNLNQLYKFLQETHEVSPRLYDECLYVAYTLPLLPGKGGFRIKSNLSKKTMGGKTLIDNLIDTSEQRDHHYEYYSGVETVEDANNNYELETSGNNNNANQDTTTVPDHLPNPVGQQDSFNPMEPQFFAEETPLEIEKRERTERINMLKKEENDSDASCGNDNNNKNNDKSKLYAVEGNDQYVQSSRSPASPSSISTPSPPSSSQNDFDRVYKMHRDNDHEGNDRHAEIFIFHYGVIVFWNFTEIQEKNILGDITFADYKNLMIRPLDEQDIETEQFHFEYDRDTERPRIFNDIVTLRSGDHIIELTLSHAIAQSSKLSRFESRISPILISVTKLPKRLALYGTLGLKREQLLKKSGKLFKLRVDVNLSSTILDTPEFFWSFEPSLHPLYVAMREYLEIDQRVQVLNDRCKVFLEFFDICVDSVAERNMARVTWWFILVILFGVIFSLTEIFVRYVIIHRHTST</sequence>
<comment type="function">
    <text evidence="3">Required for sporulation.</text>
</comment>
<comment type="subcellular location">
    <subcellularLocation>
        <location evidence="5">Membrane</location>
        <topology evidence="5">Single-pass membrane protein</topology>
    </subcellularLocation>
</comment>
<comment type="miscellaneous">
    <text evidence="4">Present with 656 molecules/cell in log phase SD medium.</text>
</comment>
<comment type="similarity">
    <text evidence="5">Belongs to the RMD1/sif2 family.</text>
</comment>
<reference key="1">
    <citation type="journal article" date="1995" name="Nat. Genet.">
        <title>Analysis of the nucleotide sequence of chromosome VI from Saccharomyces cerevisiae.</title>
        <authorList>
            <person name="Murakami Y."/>
            <person name="Naitou M."/>
            <person name="Hagiwara H."/>
            <person name="Shibata T."/>
            <person name="Ozawa M."/>
            <person name="Sasanuma S."/>
            <person name="Sasanuma M."/>
            <person name="Tsuchiya Y."/>
            <person name="Soeda E."/>
            <person name="Yokoyama K."/>
            <person name="Yamazaki M."/>
            <person name="Tashiro H."/>
            <person name="Eki T."/>
        </authorList>
    </citation>
    <scope>NUCLEOTIDE SEQUENCE [LARGE SCALE GENOMIC DNA]</scope>
    <source>
        <strain>ATCC 204508 / S288c</strain>
    </source>
</reference>
<reference key="2">
    <citation type="journal article" date="2014" name="G3 (Bethesda)">
        <title>The reference genome sequence of Saccharomyces cerevisiae: Then and now.</title>
        <authorList>
            <person name="Engel S.R."/>
            <person name="Dietrich F.S."/>
            <person name="Fisk D.G."/>
            <person name="Binkley G."/>
            <person name="Balakrishnan R."/>
            <person name="Costanzo M.C."/>
            <person name="Dwight S.S."/>
            <person name="Hitz B.C."/>
            <person name="Karra K."/>
            <person name="Nash R.S."/>
            <person name="Weng S."/>
            <person name="Wong E.D."/>
            <person name="Lloyd P."/>
            <person name="Skrzypek M.S."/>
            <person name="Miyasato S.R."/>
            <person name="Simison M."/>
            <person name="Cherry J.M."/>
        </authorList>
    </citation>
    <scope>GENOME REANNOTATION</scope>
    <source>
        <strain>ATCC 204508 / S288c</strain>
    </source>
</reference>
<reference key="3">
    <citation type="journal article" date="1996" name="Yeast">
        <title>Analysis of a 36.2 kb DNA sequence including the right telomere of chromosome VI from Saccharomyces cerevisiae.</title>
        <authorList>
            <person name="Eki T."/>
            <person name="Naitou M."/>
            <person name="Hagiwara H."/>
            <person name="Ozawa M."/>
            <person name="Sasanuma S."/>
            <person name="Sasanuma M."/>
            <person name="Tsuchiya Y."/>
            <person name="Shibata T."/>
            <person name="Hanaoka F."/>
            <person name="Murakami Y."/>
        </authorList>
    </citation>
    <scope>NUCLEOTIDE SEQUENCE [GENOMIC DNA]</scope>
    <source>
        <strain>ATCC 204511 / S288c / AB972</strain>
    </source>
</reference>
<reference key="4">
    <citation type="journal article" date="2003" name="Genetics">
        <title>Large-scale functional genomic analysis of sporulation and meiosis in Saccharomyces cerevisiae.</title>
        <authorList>
            <person name="Enyenihi A.H."/>
            <person name="Saunders W.S."/>
        </authorList>
    </citation>
    <scope>FUNCTION</scope>
</reference>
<reference key="5">
    <citation type="journal article" date="2003" name="Nature">
        <title>Global analysis of protein expression in yeast.</title>
        <authorList>
            <person name="Ghaemmaghami S."/>
            <person name="Huh W.-K."/>
            <person name="Bower K."/>
            <person name="Howson R.W."/>
            <person name="Belle A."/>
            <person name="Dephoure N."/>
            <person name="O'Shea E.K."/>
            <person name="Weissman J.S."/>
        </authorList>
    </citation>
    <scope>LEVEL OF PROTEIN EXPRESSION [LARGE SCALE ANALYSIS]</scope>
</reference>
<reference key="6">
    <citation type="journal article" date="2008" name="Mol. Cell. Proteomics">
        <title>A multidimensional chromatography technology for in-depth phosphoproteome analysis.</title>
        <authorList>
            <person name="Albuquerque C.P."/>
            <person name="Smolka M.B."/>
            <person name="Payne S.H."/>
            <person name="Bafna V."/>
            <person name="Eng J."/>
            <person name="Zhou H."/>
        </authorList>
    </citation>
    <scope>IDENTIFICATION BY MASS SPECTROMETRY [LARGE SCALE ANALYSIS]</scope>
</reference>
<reference key="7">
    <citation type="journal article" date="2012" name="Proc. Natl. Acad. Sci. U.S.A.">
        <title>N-terminal acetylome analyses and functional insights of the N-terminal acetyltransferase NatB.</title>
        <authorList>
            <person name="Van Damme P."/>
            <person name="Lasa M."/>
            <person name="Polevoda B."/>
            <person name="Gazquez C."/>
            <person name="Elosegui-Artola A."/>
            <person name="Kim D.S."/>
            <person name="De Juan-Pardo E."/>
            <person name="Demeyer K."/>
            <person name="Hole K."/>
            <person name="Larrea E."/>
            <person name="Timmerman E."/>
            <person name="Prieto J."/>
            <person name="Arnesen T."/>
            <person name="Sherman F."/>
            <person name="Gevaert K."/>
            <person name="Aldabe R."/>
        </authorList>
    </citation>
    <scope>ACETYLATION [LARGE SCALE ANALYSIS] AT SER-2</scope>
    <scope>CLEAVAGE OF INITIATOR METHIONINE [LARGE SCALE ANALYSIS]</scope>
    <scope>IDENTIFICATION BY MASS SPECTROMETRY [LARGE SCALE ANALYSIS]</scope>
</reference>
<gene>
    <name type="primary">RMD8</name>
    <name type="ordered locus">YFR048W</name>
</gene>
<keyword id="KW-0007">Acetylation</keyword>
<keyword id="KW-0469">Meiosis</keyword>
<keyword id="KW-0472">Membrane</keyword>
<keyword id="KW-1185">Reference proteome</keyword>
<keyword id="KW-0749">Sporulation</keyword>
<keyword id="KW-0812">Transmembrane</keyword>
<keyword id="KW-1133">Transmembrane helix</keyword>
<name>RMD8_YEAST</name>
<proteinExistence type="evidence at protein level"/>
<feature type="initiator methionine" description="Removed" evidence="6">
    <location>
        <position position="1"/>
    </location>
</feature>
<feature type="chain" id="PRO_0000202698" description="Sporulation protein RMD8">
    <location>
        <begin position="2"/>
        <end position="662"/>
    </location>
</feature>
<feature type="transmembrane region" description="Helical" evidence="1">
    <location>
        <begin position="630"/>
        <end position="647"/>
    </location>
</feature>
<feature type="region of interest" description="Disordered" evidence="2">
    <location>
        <begin position="1"/>
        <end position="136"/>
    </location>
</feature>
<feature type="region of interest" description="Disordered" evidence="2">
    <location>
        <begin position="286"/>
        <end position="320"/>
    </location>
</feature>
<feature type="region of interest" description="Disordered" evidence="2">
    <location>
        <begin position="346"/>
        <end position="406"/>
    </location>
</feature>
<feature type="compositionally biased region" description="Basic and acidic residues" evidence="2">
    <location>
        <begin position="99"/>
        <end position="121"/>
    </location>
</feature>
<feature type="compositionally biased region" description="Polar residues" evidence="2">
    <location>
        <begin position="286"/>
        <end position="304"/>
    </location>
</feature>
<feature type="compositionally biased region" description="Low complexity" evidence="2">
    <location>
        <begin position="383"/>
        <end position="395"/>
    </location>
</feature>
<feature type="modified residue" description="N-acetylserine" evidence="6">
    <location>
        <position position="2"/>
    </location>
</feature>
<evidence type="ECO:0000255" key="1"/>
<evidence type="ECO:0000256" key="2">
    <source>
        <dbReference type="SAM" id="MobiDB-lite"/>
    </source>
</evidence>
<evidence type="ECO:0000269" key="3">
    <source>
    </source>
</evidence>
<evidence type="ECO:0000269" key="4">
    <source>
    </source>
</evidence>
<evidence type="ECO:0000305" key="5"/>
<evidence type="ECO:0007744" key="6">
    <source>
    </source>
</evidence>
<accession>P43620</accession>
<accession>D6VTT1</accession>
<dbReference type="EMBL" id="D50617">
    <property type="protein sequence ID" value="BAA09287.1"/>
    <property type="molecule type" value="Genomic_DNA"/>
</dbReference>
<dbReference type="EMBL" id="BK006940">
    <property type="protein sequence ID" value="DAA12491.1"/>
    <property type="molecule type" value="Genomic_DNA"/>
</dbReference>
<dbReference type="PIR" id="S56303">
    <property type="entry name" value="S56303"/>
</dbReference>
<dbReference type="RefSeq" id="NP_683716.1">
    <property type="nucleotide sequence ID" value="NM_001180013.1"/>
</dbReference>
<dbReference type="SMR" id="P43620"/>
<dbReference type="BioGRID" id="31206">
    <property type="interactions" value="145"/>
</dbReference>
<dbReference type="FunCoup" id="P43620">
    <property type="interactions" value="249"/>
</dbReference>
<dbReference type="IntAct" id="P43620">
    <property type="interactions" value="33"/>
</dbReference>
<dbReference type="MINT" id="P43620"/>
<dbReference type="STRING" id="4932.YFR048W"/>
<dbReference type="GlyGen" id="P43620">
    <property type="glycosylation" value="1 site, 1 O-linked glycan (1 site)"/>
</dbReference>
<dbReference type="iPTMnet" id="P43620"/>
<dbReference type="PaxDb" id="4932-YFR048W"/>
<dbReference type="PeptideAtlas" id="P43620"/>
<dbReference type="EnsemblFungi" id="YFR048W_mRNA">
    <property type="protein sequence ID" value="YFR048W"/>
    <property type="gene ID" value="YFR048W"/>
</dbReference>
<dbReference type="GeneID" id="850609"/>
<dbReference type="KEGG" id="sce:YFR048W"/>
<dbReference type="AGR" id="SGD:S000001944"/>
<dbReference type="SGD" id="S000001944">
    <property type="gene designation" value="RMD8"/>
</dbReference>
<dbReference type="VEuPathDB" id="FungiDB:YFR048W"/>
<dbReference type="eggNOG" id="KOG2861">
    <property type="taxonomic scope" value="Eukaryota"/>
</dbReference>
<dbReference type="GeneTree" id="ENSGT00390000013337"/>
<dbReference type="HOGENOM" id="CLU_011220_3_0_1"/>
<dbReference type="InParanoid" id="P43620"/>
<dbReference type="OMA" id="NERCQVF"/>
<dbReference type="OrthoDB" id="18302at2759"/>
<dbReference type="BioCyc" id="YEAST:G3O-30494-MONOMER"/>
<dbReference type="BioGRID-ORCS" id="850609">
    <property type="hits" value="1 hit in 10 CRISPR screens"/>
</dbReference>
<dbReference type="PRO" id="PR:P43620"/>
<dbReference type="Proteomes" id="UP000002311">
    <property type="component" value="Chromosome VI"/>
</dbReference>
<dbReference type="RNAct" id="P43620">
    <property type="molecule type" value="protein"/>
</dbReference>
<dbReference type="GO" id="GO:0005737">
    <property type="term" value="C:cytoplasm"/>
    <property type="evidence" value="ECO:0007005"/>
    <property type="project" value="SGD"/>
</dbReference>
<dbReference type="GO" id="GO:0005783">
    <property type="term" value="C:endoplasmic reticulum"/>
    <property type="evidence" value="ECO:0007005"/>
    <property type="project" value="SGD"/>
</dbReference>
<dbReference type="GO" id="GO:0016020">
    <property type="term" value="C:membrane"/>
    <property type="evidence" value="ECO:0007669"/>
    <property type="project" value="UniProtKB-SubCell"/>
</dbReference>
<dbReference type="GO" id="GO:0005739">
    <property type="term" value="C:mitochondrion"/>
    <property type="evidence" value="ECO:0007669"/>
    <property type="project" value="UniProtKB-ARBA"/>
</dbReference>
<dbReference type="GO" id="GO:0051321">
    <property type="term" value="P:meiotic cell cycle"/>
    <property type="evidence" value="ECO:0007669"/>
    <property type="project" value="UniProtKB-KW"/>
</dbReference>
<dbReference type="GO" id="GO:0030435">
    <property type="term" value="P:sporulation resulting in formation of a cellular spore"/>
    <property type="evidence" value="ECO:0007669"/>
    <property type="project" value="UniProtKB-KW"/>
</dbReference>
<dbReference type="InterPro" id="IPR003734">
    <property type="entry name" value="DUF155"/>
</dbReference>
<dbReference type="InterPro" id="IPR051624">
    <property type="entry name" value="RMD1/Sad1-interacting"/>
</dbReference>
<dbReference type="PANTHER" id="PTHR16255">
    <property type="entry name" value="REQUIRED FOR MEIOTIC NUCLEAR DIVISION PROTEIN 1 HOMOLOG"/>
    <property type="match status" value="1"/>
</dbReference>
<dbReference type="PANTHER" id="PTHR16255:SF4">
    <property type="entry name" value="SPORULATION PROTEIN RMD8"/>
    <property type="match status" value="1"/>
</dbReference>
<dbReference type="Pfam" id="PF02582">
    <property type="entry name" value="DUF155"/>
    <property type="match status" value="1"/>
</dbReference>